<comment type="function">
    <text evidence="1">The glycine cleavage system catalyzes the degradation of glycine. The P protein binds the alpha-amino group of glycine through its pyridoxal phosphate cofactor; CO(2) is released and the remaining methylamine moiety is then transferred to the lipoamide cofactor of the H protein.</text>
</comment>
<comment type="catalytic activity">
    <reaction evidence="1">
        <text>N(6)-[(R)-lipoyl]-L-lysyl-[glycine-cleavage complex H protein] + glycine + H(+) = N(6)-[(R)-S(8)-aminomethyldihydrolipoyl]-L-lysyl-[glycine-cleavage complex H protein] + CO2</text>
        <dbReference type="Rhea" id="RHEA:24304"/>
        <dbReference type="Rhea" id="RHEA-COMP:10494"/>
        <dbReference type="Rhea" id="RHEA-COMP:10495"/>
        <dbReference type="ChEBI" id="CHEBI:15378"/>
        <dbReference type="ChEBI" id="CHEBI:16526"/>
        <dbReference type="ChEBI" id="CHEBI:57305"/>
        <dbReference type="ChEBI" id="CHEBI:83099"/>
        <dbReference type="ChEBI" id="CHEBI:83143"/>
        <dbReference type="EC" id="1.4.4.2"/>
    </reaction>
</comment>
<comment type="cofactor">
    <cofactor evidence="1">
        <name>pyridoxal 5'-phosphate</name>
        <dbReference type="ChEBI" id="CHEBI:597326"/>
    </cofactor>
</comment>
<comment type="subunit">
    <text evidence="1">The glycine cleavage system is composed of four proteins: P, T, L and H. In this organism, the P 'protein' is a heterodimer of two subunits.</text>
</comment>
<comment type="similarity">
    <text evidence="1">Belongs to the GcvP family. C-terminal subunit subfamily.</text>
</comment>
<sequence>MTSKSSPLIFERSREGRYAYSLPKSDIKTNSVESLLDDKFIRKNKAEFPEVAELDLVRHYTELSNKNFGVDNGFYPLGSCTMKYNPKINEKVARIPGFSESHPLQDEDQVQGSLEIIYSLQEELKEITGMDEVTLQPAAGAHGEWTALMIFKAYHENNGEGHRDEVIVPDSAHGTNPASASFAGFKSVTVKSNERGEVDIDDLKRVVNENTAAIMLTNPNTLGIFEKNIMEIREIVHNAGGLLYYDGANLNAIMDKVRPGDMGFDAVHLNLHKTFTGPHGGGGPGSGPVGVVKELASYLPKPMVIKDGDKFKYDNDIKNSIGRVKPFYGNFGIYLRAYTYIRTMGATGLKEVSEAAVLNANYIKARLSEHFEIPYKQYCKHEFVLSGVRQKEFGVRTLDMAKRLLDFGVHPPTIYFPLNVEEGMMIEPTETESKETLDYFIDTLISIAEEAKNDPDKVLEAPHTTVIDRLDEATAARKPILKFENLKQEK</sequence>
<dbReference type="EC" id="1.4.4.2" evidence="1"/>
<dbReference type="EMBL" id="CP000736">
    <property type="protein sequence ID" value="ABR52474.1"/>
    <property type="molecule type" value="Genomic_DNA"/>
</dbReference>
<dbReference type="SMR" id="A6U206"/>
<dbReference type="KEGG" id="sah:SaurJH1_1626"/>
<dbReference type="HOGENOM" id="CLU_004620_5_0_9"/>
<dbReference type="GO" id="GO:0005829">
    <property type="term" value="C:cytosol"/>
    <property type="evidence" value="ECO:0007669"/>
    <property type="project" value="TreeGrafter"/>
</dbReference>
<dbReference type="GO" id="GO:0005960">
    <property type="term" value="C:glycine cleavage complex"/>
    <property type="evidence" value="ECO:0007669"/>
    <property type="project" value="TreeGrafter"/>
</dbReference>
<dbReference type="GO" id="GO:0016594">
    <property type="term" value="F:glycine binding"/>
    <property type="evidence" value="ECO:0007669"/>
    <property type="project" value="TreeGrafter"/>
</dbReference>
<dbReference type="GO" id="GO:0004375">
    <property type="term" value="F:glycine dehydrogenase (decarboxylating) activity"/>
    <property type="evidence" value="ECO:0007669"/>
    <property type="project" value="UniProtKB-EC"/>
</dbReference>
<dbReference type="GO" id="GO:0030170">
    <property type="term" value="F:pyridoxal phosphate binding"/>
    <property type="evidence" value="ECO:0007669"/>
    <property type="project" value="TreeGrafter"/>
</dbReference>
<dbReference type="GO" id="GO:0019464">
    <property type="term" value="P:glycine decarboxylation via glycine cleavage system"/>
    <property type="evidence" value="ECO:0007669"/>
    <property type="project" value="UniProtKB-UniRule"/>
</dbReference>
<dbReference type="CDD" id="cd00613">
    <property type="entry name" value="GDC-P"/>
    <property type="match status" value="1"/>
</dbReference>
<dbReference type="FunFam" id="3.40.640.10:FF:000034">
    <property type="entry name" value="Probable glycine dehydrogenase (decarboxylating) subunit 2"/>
    <property type="match status" value="1"/>
</dbReference>
<dbReference type="FunFam" id="3.90.1150.10:FF:000014">
    <property type="entry name" value="Probable glycine dehydrogenase (decarboxylating) subunit 2"/>
    <property type="match status" value="1"/>
</dbReference>
<dbReference type="Gene3D" id="6.20.440.10">
    <property type="match status" value="1"/>
</dbReference>
<dbReference type="Gene3D" id="3.90.1150.10">
    <property type="entry name" value="Aspartate Aminotransferase, domain 1"/>
    <property type="match status" value="1"/>
</dbReference>
<dbReference type="Gene3D" id="3.40.640.10">
    <property type="entry name" value="Type I PLP-dependent aspartate aminotransferase-like (Major domain)"/>
    <property type="match status" value="1"/>
</dbReference>
<dbReference type="HAMAP" id="MF_00713">
    <property type="entry name" value="GcvPB"/>
    <property type="match status" value="1"/>
</dbReference>
<dbReference type="InterPro" id="IPR000192">
    <property type="entry name" value="Aminotrans_V_dom"/>
</dbReference>
<dbReference type="InterPro" id="IPR023012">
    <property type="entry name" value="GcvPB"/>
</dbReference>
<dbReference type="InterPro" id="IPR049316">
    <property type="entry name" value="GDC-P_C"/>
</dbReference>
<dbReference type="InterPro" id="IPR020581">
    <property type="entry name" value="GDC_P"/>
</dbReference>
<dbReference type="InterPro" id="IPR015424">
    <property type="entry name" value="PyrdxlP-dep_Trfase"/>
</dbReference>
<dbReference type="InterPro" id="IPR015421">
    <property type="entry name" value="PyrdxlP-dep_Trfase_major"/>
</dbReference>
<dbReference type="InterPro" id="IPR015422">
    <property type="entry name" value="PyrdxlP-dep_Trfase_small"/>
</dbReference>
<dbReference type="NCBIfam" id="NF003346">
    <property type="entry name" value="PRK04366.1"/>
    <property type="match status" value="1"/>
</dbReference>
<dbReference type="PANTHER" id="PTHR11773:SF1">
    <property type="entry name" value="GLYCINE DEHYDROGENASE (DECARBOXYLATING), MITOCHONDRIAL"/>
    <property type="match status" value="1"/>
</dbReference>
<dbReference type="PANTHER" id="PTHR11773">
    <property type="entry name" value="GLYCINE DEHYDROGENASE, DECARBOXYLATING"/>
    <property type="match status" value="1"/>
</dbReference>
<dbReference type="Pfam" id="PF00266">
    <property type="entry name" value="Aminotran_5"/>
    <property type="match status" value="1"/>
</dbReference>
<dbReference type="Pfam" id="PF21478">
    <property type="entry name" value="GcvP2_C"/>
    <property type="match status" value="1"/>
</dbReference>
<dbReference type="SUPFAM" id="SSF53383">
    <property type="entry name" value="PLP-dependent transferases"/>
    <property type="match status" value="1"/>
</dbReference>
<reference key="1">
    <citation type="submission" date="2007-06" db="EMBL/GenBank/DDBJ databases">
        <title>Complete sequence of chromosome of Staphylococcus aureus subsp. aureus JH1.</title>
        <authorList>
            <consortium name="US DOE Joint Genome Institute"/>
            <person name="Copeland A."/>
            <person name="Lucas S."/>
            <person name="Lapidus A."/>
            <person name="Barry K."/>
            <person name="Detter J.C."/>
            <person name="Glavina del Rio T."/>
            <person name="Hammon N."/>
            <person name="Israni S."/>
            <person name="Dalin E."/>
            <person name="Tice H."/>
            <person name="Pitluck S."/>
            <person name="Chain P."/>
            <person name="Malfatti S."/>
            <person name="Shin M."/>
            <person name="Vergez L."/>
            <person name="Schmutz J."/>
            <person name="Larimer F."/>
            <person name="Land M."/>
            <person name="Hauser L."/>
            <person name="Kyrpides N."/>
            <person name="Ivanova N."/>
            <person name="Tomasz A."/>
            <person name="Richardson P."/>
        </authorList>
    </citation>
    <scope>NUCLEOTIDE SEQUENCE [LARGE SCALE GENOMIC DNA]</scope>
    <source>
        <strain>JH1</strain>
    </source>
</reference>
<protein>
    <recommendedName>
        <fullName evidence="1">Probable glycine dehydrogenase (decarboxylating) subunit 2</fullName>
        <ecNumber evidence="1">1.4.4.2</ecNumber>
    </recommendedName>
    <alternativeName>
        <fullName evidence="1">Glycine cleavage system P-protein subunit 2</fullName>
    </alternativeName>
    <alternativeName>
        <fullName evidence="1">Glycine decarboxylase subunit 2</fullName>
    </alternativeName>
    <alternativeName>
        <fullName evidence="1">Glycine dehydrogenase (aminomethyl-transferring) subunit 2</fullName>
    </alternativeName>
</protein>
<feature type="chain" id="PRO_1000083232" description="Probable glycine dehydrogenase (decarboxylating) subunit 2">
    <location>
        <begin position="1"/>
        <end position="490"/>
    </location>
</feature>
<feature type="modified residue" description="N6-(pyridoxal phosphate)lysine" evidence="1">
    <location>
        <position position="273"/>
    </location>
</feature>
<proteinExistence type="inferred from homology"/>
<organism>
    <name type="scientific">Staphylococcus aureus (strain JH1)</name>
    <dbReference type="NCBI Taxonomy" id="359787"/>
    <lineage>
        <taxon>Bacteria</taxon>
        <taxon>Bacillati</taxon>
        <taxon>Bacillota</taxon>
        <taxon>Bacilli</taxon>
        <taxon>Bacillales</taxon>
        <taxon>Staphylococcaceae</taxon>
        <taxon>Staphylococcus</taxon>
    </lineage>
</organism>
<keyword id="KW-0560">Oxidoreductase</keyword>
<keyword id="KW-0663">Pyridoxal phosphate</keyword>
<evidence type="ECO:0000255" key="1">
    <source>
        <dbReference type="HAMAP-Rule" id="MF_00713"/>
    </source>
</evidence>
<gene>
    <name evidence="1" type="primary">gcvPB</name>
    <name type="ordered locus">SaurJH1_1626</name>
</gene>
<accession>A6U206</accession>
<name>GCSPB_STAA2</name>